<gene>
    <name evidence="8" type="primary">RCCR</name>
    <name evidence="9" type="synonym">ACD2</name>
    <name evidence="11" type="ordered locus">At4g37000</name>
    <name evidence="12" type="ORF">C7A10_360</name>
</gene>
<accession>Q8LDU4</accession>
<accession>O23185</accession>
<reference key="1">
    <citation type="journal article" date="2000" name="Plant J.">
        <title>Molecular cloning, functional expression and characterization of RCC reductase, involved in chlorophyll catabolism.</title>
        <authorList>
            <person name="Wuethrich K.L."/>
            <person name="Bovet L."/>
            <person name="Hunziker P.E."/>
            <person name="Donnison I.S."/>
            <person name="Hoertensteiner S."/>
        </authorList>
    </citation>
    <scope>NUCLEOTIDE SEQUENCE</scope>
    <scope>FUNCTION</scope>
    <scope>CATALYTIC ACTIVITY</scope>
    <scope>SUBCELLULAR LOCATION</scope>
    <source>
        <strain>cv. Columbia</strain>
    </source>
</reference>
<reference key="2">
    <citation type="journal article" date="2001" name="Proc. Natl. Acad. Sci. U.S.A.">
        <title>The Arabidopsis accelerated cell death gene ACD2 encodes red chlorophyll catabolite reductase and suppresses the spread of disease symptoms.</title>
        <authorList>
            <person name="Mach J.M."/>
            <person name="Castillo A.R."/>
            <person name="Hoogstraten R."/>
            <person name="Greenberg J.T."/>
        </authorList>
    </citation>
    <scope>NUCLEOTIDE SEQUENCE [MRNA]</scope>
    <scope>SUBCELLULAR LOCATION</scope>
    <scope>MUTAGENESIS OF GLY-140; 181-TYR--ASP-192 AND ARG-279</scope>
    <source>
        <strain>cv. Columbia</strain>
    </source>
</reference>
<reference key="3">
    <citation type="journal article" date="1998" name="Nature">
        <title>Analysis of 1.9 Mb of contiguous sequence from chromosome 4 of Arabidopsis thaliana.</title>
        <authorList>
            <person name="Bevan M."/>
            <person name="Bancroft I."/>
            <person name="Bent E."/>
            <person name="Love K."/>
            <person name="Goodman H.M."/>
            <person name="Dean C."/>
            <person name="Bergkamp R."/>
            <person name="Dirkse W."/>
            <person name="van Staveren M."/>
            <person name="Stiekema W."/>
            <person name="Drost L."/>
            <person name="Ridley P."/>
            <person name="Hudson S.-A."/>
            <person name="Patel K."/>
            <person name="Murphy G."/>
            <person name="Piffanelli P."/>
            <person name="Wedler H."/>
            <person name="Wedler E."/>
            <person name="Wambutt R."/>
            <person name="Weitzenegger T."/>
            <person name="Pohl T."/>
            <person name="Terryn N."/>
            <person name="Gielen J."/>
            <person name="Villarroel R."/>
            <person name="De Clercq R."/>
            <person name="van Montagu M."/>
            <person name="Lecharny A."/>
            <person name="Aubourg S."/>
            <person name="Gy I."/>
            <person name="Kreis M."/>
            <person name="Lao N."/>
            <person name="Kavanagh T."/>
            <person name="Hempel S."/>
            <person name="Kotter P."/>
            <person name="Entian K.-D."/>
            <person name="Rieger M."/>
            <person name="Schaefer M."/>
            <person name="Funk B."/>
            <person name="Mueller-Auer S."/>
            <person name="Silvey M."/>
            <person name="James R."/>
            <person name="Monfort A."/>
            <person name="Pons A."/>
            <person name="Puigdomenech P."/>
            <person name="Douka A."/>
            <person name="Voukelatou E."/>
            <person name="Milioni D."/>
            <person name="Hatzopoulos P."/>
            <person name="Piravandi E."/>
            <person name="Obermaier B."/>
            <person name="Hilbert H."/>
            <person name="Duesterhoeft A."/>
            <person name="Moores T."/>
            <person name="Jones J.D.G."/>
            <person name="Eneva T."/>
            <person name="Palme K."/>
            <person name="Benes V."/>
            <person name="Rechmann S."/>
            <person name="Ansorge W."/>
            <person name="Cooke R."/>
            <person name="Berger C."/>
            <person name="Delseny M."/>
            <person name="Voet M."/>
            <person name="Volckaert G."/>
            <person name="Mewes H.-W."/>
            <person name="Klosterman S."/>
            <person name="Schueller C."/>
            <person name="Chalwatzis N."/>
        </authorList>
    </citation>
    <scope>NUCLEOTIDE SEQUENCE [LARGE SCALE GENOMIC DNA]</scope>
    <source>
        <strain>cv. Columbia</strain>
    </source>
</reference>
<reference key="4">
    <citation type="journal article" date="1999" name="Nature">
        <title>Sequence and analysis of chromosome 4 of the plant Arabidopsis thaliana.</title>
        <authorList>
            <person name="Mayer K.F.X."/>
            <person name="Schueller C."/>
            <person name="Wambutt R."/>
            <person name="Murphy G."/>
            <person name="Volckaert G."/>
            <person name="Pohl T."/>
            <person name="Duesterhoeft A."/>
            <person name="Stiekema W."/>
            <person name="Entian K.-D."/>
            <person name="Terryn N."/>
            <person name="Harris B."/>
            <person name="Ansorge W."/>
            <person name="Brandt P."/>
            <person name="Grivell L.A."/>
            <person name="Rieger M."/>
            <person name="Weichselgartner M."/>
            <person name="de Simone V."/>
            <person name="Obermaier B."/>
            <person name="Mache R."/>
            <person name="Mueller M."/>
            <person name="Kreis M."/>
            <person name="Delseny M."/>
            <person name="Puigdomenech P."/>
            <person name="Watson M."/>
            <person name="Schmidtheini T."/>
            <person name="Reichert B."/>
            <person name="Portetelle D."/>
            <person name="Perez-Alonso M."/>
            <person name="Boutry M."/>
            <person name="Bancroft I."/>
            <person name="Vos P."/>
            <person name="Hoheisel J."/>
            <person name="Zimmermann W."/>
            <person name="Wedler H."/>
            <person name="Ridley P."/>
            <person name="Langham S.-A."/>
            <person name="McCullagh B."/>
            <person name="Bilham L."/>
            <person name="Robben J."/>
            <person name="van der Schueren J."/>
            <person name="Grymonprez B."/>
            <person name="Chuang Y.-J."/>
            <person name="Vandenbussche F."/>
            <person name="Braeken M."/>
            <person name="Weltjens I."/>
            <person name="Voet M."/>
            <person name="Bastiaens I."/>
            <person name="Aert R."/>
            <person name="Defoor E."/>
            <person name="Weitzenegger T."/>
            <person name="Bothe G."/>
            <person name="Ramsperger U."/>
            <person name="Hilbert H."/>
            <person name="Braun M."/>
            <person name="Holzer E."/>
            <person name="Brandt A."/>
            <person name="Peters S."/>
            <person name="van Staveren M."/>
            <person name="Dirkse W."/>
            <person name="Mooijman P."/>
            <person name="Klein Lankhorst R."/>
            <person name="Rose M."/>
            <person name="Hauf J."/>
            <person name="Koetter P."/>
            <person name="Berneiser S."/>
            <person name="Hempel S."/>
            <person name="Feldpausch M."/>
            <person name="Lamberth S."/>
            <person name="Van den Daele H."/>
            <person name="De Keyser A."/>
            <person name="Buysshaert C."/>
            <person name="Gielen J."/>
            <person name="Villarroel R."/>
            <person name="De Clercq R."/>
            <person name="van Montagu M."/>
            <person name="Rogers J."/>
            <person name="Cronin A."/>
            <person name="Quail M.A."/>
            <person name="Bray-Allen S."/>
            <person name="Clark L."/>
            <person name="Doggett J."/>
            <person name="Hall S."/>
            <person name="Kay M."/>
            <person name="Lennard N."/>
            <person name="McLay K."/>
            <person name="Mayes R."/>
            <person name="Pettett A."/>
            <person name="Rajandream M.A."/>
            <person name="Lyne M."/>
            <person name="Benes V."/>
            <person name="Rechmann S."/>
            <person name="Borkova D."/>
            <person name="Bloecker H."/>
            <person name="Scharfe M."/>
            <person name="Grimm M."/>
            <person name="Loehnert T.-H."/>
            <person name="Dose S."/>
            <person name="de Haan M."/>
            <person name="Maarse A.C."/>
            <person name="Schaefer M."/>
            <person name="Mueller-Auer S."/>
            <person name="Gabel C."/>
            <person name="Fuchs M."/>
            <person name="Fartmann B."/>
            <person name="Granderath K."/>
            <person name="Dauner D."/>
            <person name="Herzl A."/>
            <person name="Neumann S."/>
            <person name="Argiriou A."/>
            <person name="Vitale D."/>
            <person name="Liguori R."/>
            <person name="Piravandi E."/>
            <person name="Massenet O."/>
            <person name="Quigley F."/>
            <person name="Clabauld G."/>
            <person name="Muendlein A."/>
            <person name="Felber R."/>
            <person name="Schnabl S."/>
            <person name="Hiller R."/>
            <person name="Schmidt W."/>
            <person name="Lecharny A."/>
            <person name="Aubourg S."/>
            <person name="Chefdor F."/>
            <person name="Cooke R."/>
            <person name="Berger C."/>
            <person name="Monfort A."/>
            <person name="Casacuberta E."/>
            <person name="Gibbons T."/>
            <person name="Weber N."/>
            <person name="Vandenbol M."/>
            <person name="Bargues M."/>
            <person name="Terol J."/>
            <person name="Torres A."/>
            <person name="Perez-Perez A."/>
            <person name="Purnelle B."/>
            <person name="Bent E."/>
            <person name="Johnson S."/>
            <person name="Tacon D."/>
            <person name="Jesse T."/>
            <person name="Heijnen L."/>
            <person name="Schwarz S."/>
            <person name="Scholler P."/>
            <person name="Heber S."/>
            <person name="Francs P."/>
            <person name="Bielke C."/>
            <person name="Frishman D."/>
            <person name="Haase D."/>
            <person name="Lemcke K."/>
            <person name="Mewes H.-W."/>
            <person name="Stocker S."/>
            <person name="Zaccaria P."/>
            <person name="Bevan M."/>
            <person name="Wilson R.K."/>
            <person name="de la Bastide M."/>
            <person name="Habermann K."/>
            <person name="Parnell L."/>
            <person name="Dedhia N."/>
            <person name="Gnoj L."/>
            <person name="Schutz K."/>
            <person name="Huang E."/>
            <person name="Spiegel L."/>
            <person name="Sekhon M."/>
            <person name="Murray J."/>
            <person name="Sheet P."/>
            <person name="Cordes M."/>
            <person name="Abu-Threideh J."/>
            <person name="Stoneking T."/>
            <person name="Kalicki J."/>
            <person name="Graves T."/>
            <person name="Harmon G."/>
            <person name="Edwards J."/>
            <person name="Latreille P."/>
            <person name="Courtney L."/>
            <person name="Cloud J."/>
            <person name="Abbott A."/>
            <person name="Scott K."/>
            <person name="Johnson D."/>
            <person name="Minx P."/>
            <person name="Bentley D."/>
            <person name="Fulton B."/>
            <person name="Miller N."/>
            <person name="Greco T."/>
            <person name="Kemp K."/>
            <person name="Kramer J."/>
            <person name="Fulton L."/>
            <person name="Mardis E."/>
            <person name="Dante M."/>
            <person name="Pepin K."/>
            <person name="Hillier L.W."/>
            <person name="Nelson J."/>
            <person name="Spieth J."/>
            <person name="Ryan E."/>
            <person name="Andrews S."/>
            <person name="Geisel C."/>
            <person name="Layman D."/>
            <person name="Du H."/>
            <person name="Ali J."/>
            <person name="Berghoff A."/>
            <person name="Jones K."/>
            <person name="Drone K."/>
            <person name="Cotton M."/>
            <person name="Joshu C."/>
            <person name="Antonoiu B."/>
            <person name="Zidanic M."/>
            <person name="Strong C."/>
            <person name="Sun H."/>
            <person name="Lamar B."/>
            <person name="Yordan C."/>
            <person name="Ma P."/>
            <person name="Zhong J."/>
            <person name="Preston R."/>
            <person name="Vil D."/>
            <person name="Shekher M."/>
            <person name="Matero A."/>
            <person name="Shah R."/>
            <person name="Swaby I.K."/>
            <person name="O'Shaughnessy A."/>
            <person name="Rodriguez M."/>
            <person name="Hoffman J."/>
            <person name="Till S."/>
            <person name="Granat S."/>
            <person name="Shohdy N."/>
            <person name="Hasegawa A."/>
            <person name="Hameed A."/>
            <person name="Lodhi M."/>
            <person name="Johnson A."/>
            <person name="Chen E."/>
            <person name="Marra M.A."/>
            <person name="Martienssen R."/>
            <person name="McCombie W.R."/>
        </authorList>
    </citation>
    <scope>NUCLEOTIDE SEQUENCE [LARGE SCALE GENOMIC DNA]</scope>
    <source>
        <strain>cv. Columbia</strain>
    </source>
</reference>
<reference key="5">
    <citation type="journal article" date="2017" name="Plant J.">
        <title>Araport11: a complete reannotation of the Arabidopsis thaliana reference genome.</title>
        <authorList>
            <person name="Cheng C.Y."/>
            <person name="Krishnakumar V."/>
            <person name="Chan A.P."/>
            <person name="Thibaud-Nissen F."/>
            <person name="Schobel S."/>
            <person name="Town C.D."/>
        </authorList>
    </citation>
    <scope>GENOME REANNOTATION</scope>
    <source>
        <strain>cv. Columbia</strain>
    </source>
</reference>
<reference key="6">
    <citation type="journal article" date="2003" name="Science">
        <title>Empirical analysis of transcriptional activity in the Arabidopsis genome.</title>
        <authorList>
            <person name="Yamada K."/>
            <person name="Lim J."/>
            <person name="Dale J.M."/>
            <person name="Chen H."/>
            <person name="Shinn P."/>
            <person name="Palm C.J."/>
            <person name="Southwick A.M."/>
            <person name="Wu H.C."/>
            <person name="Kim C.J."/>
            <person name="Nguyen M."/>
            <person name="Pham P.K."/>
            <person name="Cheuk R.F."/>
            <person name="Karlin-Newmann G."/>
            <person name="Liu S.X."/>
            <person name="Lam B."/>
            <person name="Sakano H."/>
            <person name="Wu T."/>
            <person name="Yu G."/>
            <person name="Miranda M."/>
            <person name="Quach H.L."/>
            <person name="Tripp M."/>
            <person name="Chang C.H."/>
            <person name="Lee J.M."/>
            <person name="Toriumi M.J."/>
            <person name="Chan M.M."/>
            <person name="Tang C.C."/>
            <person name="Onodera C.S."/>
            <person name="Deng J.M."/>
            <person name="Akiyama K."/>
            <person name="Ansari Y."/>
            <person name="Arakawa T."/>
            <person name="Banh J."/>
            <person name="Banno F."/>
            <person name="Bowser L."/>
            <person name="Brooks S.Y."/>
            <person name="Carninci P."/>
            <person name="Chao Q."/>
            <person name="Choy N."/>
            <person name="Enju A."/>
            <person name="Goldsmith A.D."/>
            <person name="Gurjal M."/>
            <person name="Hansen N.F."/>
            <person name="Hayashizaki Y."/>
            <person name="Johnson-Hopson C."/>
            <person name="Hsuan V.W."/>
            <person name="Iida K."/>
            <person name="Karnes M."/>
            <person name="Khan S."/>
            <person name="Koesema E."/>
            <person name="Ishida J."/>
            <person name="Jiang P.X."/>
            <person name="Jones T."/>
            <person name="Kawai J."/>
            <person name="Kamiya A."/>
            <person name="Meyers C."/>
            <person name="Nakajima M."/>
            <person name="Narusaka M."/>
            <person name="Seki M."/>
            <person name="Sakurai T."/>
            <person name="Satou M."/>
            <person name="Tamse R."/>
            <person name="Vaysberg M."/>
            <person name="Wallender E.K."/>
            <person name="Wong C."/>
            <person name="Yamamura Y."/>
            <person name="Yuan S."/>
            <person name="Shinozaki K."/>
            <person name="Davis R.W."/>
            <person name="Theologis A."/>
            <person name="Ecker J.R."/>
        </authorList>
    </citation>
    <scope>NUCLEOTIDE SEQUENCE [LARGE SCALE MRNA]</scope>
    <source>
        <strain>cv. Columbia</strain>
    </source>
</reference>
<reference key="7">
    <citation type="submission" date="2002-03" db="EMBL/GenBank/DDBJ databases">
        <title>Full-length cDNA from Arabidopsis thaliana.</title>
        <authorList>
            <person name="Brover V.V."/>
            <person name="Troukhan M.E."/>
            <person name="Alexandrov N.A."/>
            <person name="Lu Y.-P."/>
            <person name="Flavell R.B."/>
            <person name="Feldmann K.A."/>
        </authorList>
    </citation>
    <scope>NUCLEOTIDE SEQUENCE [LARGE SCALE MRNA]</scope>
</reference>
<reference key="8">
    <citation type="journal article" date="2012" name="Plant Cell">
        <title>STAY-GREEN and chlorophyll catabolic enzymes interact at light-harvesting complex II for chlorophyll detoxification during leaf senescence in Arabidopsis.</title>
        <authorList>
            <person name="Sakuraba Y."/>
            <person name="Schelbert S."/>
            <person name="Park S.Y."/>
            <person name="Han S.H."/>
            <person name="Lee B.D."/>
            <person name="Andres C.B."/>
            <person name="Kessler F."/>
            <person name="Hortensteiner S."/>
            <person name="Paek N.C."/>
        </authorList>
    </citation>
    <scope>SUBCELLULAR LOCATION</scope>
    <scope>INTERACTION WITH SGR1; NYC1; NOL; PAO; PPH AND LHCII COMPLEX</scope>
</reference>
<reference key="9">
    <citation type="journal article" date="2013" name="Biochem. Biophys. Res. Commun.">
        <title>7-Hydroxymethyl chlorophyll a reductase functions in metabolic channeling of chlorophyll breakdown intermediates during leaf senescence.</title>
        <authorList>
            <person name="Sakuraba Y."/>
            <person name="Kim Y.S."/>
            <person name="Yoo S.C."/>
            <person name="Hortensteiner S."/>
            <person name="Paek N.C."/>
        </authorList>
    </citation>
    <scope>INTERACTION WITH HCAR</scope>
    <scope>DEVELOPMENTAL STAGE</scope>
</reference>
<reference key="10">
    <citation type="journal article" date="2009" name="J. Mol. Biol.">
        <title>Crystal structure of red chlorophyll catabolite reductase: enlargement of the ferredoxin-dependent bilin reductase family.</title>
        <authorList>
            <person name="Sugishima M."/>
            <person name="Kitamori Y."/>
            <person name="Noguchi M."/>
            <person name="Kohchi T."/>
            <person name="Fukuyama K."/>
        </authorList>
    </citation>
    <scope>X-RAY CRYSTALLOGRAPHY (2.40 ANGSTROMS) OF 40-319</scope>
    <scope>SUBUNIT</scope>
</reference>
<reference key="11">
    <citation type="journal article" date="2010" name="J. Mol. Biol.">
        <title>Crystal structures of the substrate-bound forms of red chlorophyll catabolite reductase: implications for site-specific and stereospecific reaction.</title>
        <authorList>
            <person name="Sugishima M."/>
            <person name="Okamoto Y."/>
            <person name="Noguchi M."/>
            <person name="Kohchi T."/>
            <person name="Tamiaki H."/>
            <person name="Fukuyama K."/>
        </authorList>
    </citation>
    <scope>X-RAY CRYSTALLOGRAPHY (2.00 ANGSTROMS) OF 49-319 IN COMPLEX WITH RED CHLOROPHYLL CATABOLITE</scope>
    <scope>SUBUNIT</scope>
    <scope>MUTAGENESIS OF PHE-218</scope>
</reference>
<dbReference type="EC" id="1.3.7.12" evidence="2"/>
<dbReference type="EMBL" id="AF326347">
    <property type="protein sequence ID" value="AAG53980.1"/>
    <property type="molecule type" value="mRNA"/>
</dbReference>
<dbReference type="EMBL" id="Z99707">
    <property type="protein sequence ID" value="CAB16763.1"/>
    <property type="molecule type" value="Genomic_DNA"/>
</dbReference>
<dbReference type="EMBL" id="AL161590">
    <property type="protein sequence ID" value="CAB80366.1"/>
    <property type="molecule type" value="Genomic_DNA"/>
</dbReference>
<dbReference type="EMBL" id="CP002687">
    <property type="protein sequence ID" value="AEE86733.1"/>
    <property type="molecule type" value="Genomic_DNA"/>
</dbReference>
<dbReference type="EMBL" id="AY045578">
    <property type="protein sequence ID" value="AAK73936.1"/>
    <property type="molecule type" value="mRNA"/>
</dbReference>
<dbReference type="EMBL" id="AY093785">
    <property type="protein sequence ID" value="AAM10401.1"/>
    <property type="molecule type" value="mRNA"/>
</dbReference>
<dbReference type="EMBL" id="AY085797">
    <property type="protein sequence ID" value="AAM63013.1"/>
    <property type="molecule type" value="mRNA"/>
</dbReference>
<dbReference type="PIR" id="A85437">
    <property type="entry name" value="A85437"/>
</dbReference>
<dbReference type="RefSeq" id="NP_195417.1">
    <property type="nucleotide sequence ID" value="NM_119863.4"/>
</dbReference>
<dbReference type="PDB" id="2ZXK">
    <property type="method" value="X-ray"/>
    <property type="resolution" value="2.50 A"/>
    <property type="chains" value="A/B=40-319"/>
</dbReference>
<dbReference type="PDB" id="2ZXL">
    <property type="method" value="X-ray"/>
    <property type="resolution" value="2.40 A"/>
    <property type="chains" value="A/B=40-319"/>
</dbReference>
<dbReference type="PDB" id="3AGA">
    <property type="method" value="X-ray"/>
    <property type="resolution" value="2.60 A"/>
    <property type="chains" value="A/B=49-319"/>
</dbReference>
<dbReference type="PDB" id="3AGB">
    <property type="method" value="X-ray"/>
    <property type="resolution" value="2.20 A"/>
    <property type="chains" value="A/B=49-319"/>
</dbReference>
<dbReference type="PDB" id="3AGC">
    <property type="method" value="X-ray"/>
    <property type="resolution" value="2.00 A"/>
    <property type="chains" value="A/B=49-319"/>
</dbReference>
<dbReference type="PDBsum" id="2ZXK"/>
<dbReference type="PDBsum" id="2ZXL"/>
<dbReference type="PDBsum" id="3AGA"/>
<dbReference type="PDBsum" id="3AGB"/>
<dbReference type="PDBsum" id="3AGC"/>
<dbReference type="SMR" id="Q8LDU4"/>
<dbReference type="BioGRID" id="15135">
    <property type="interactions" value="9"/>
</dbReference>
<dbReference type="FunCoup" id="Q8LDU4">
    <property type="interactions" value="1361"/>
</dbReference>
<dbReference type="IntAct" id="Q8LDU4">
    <property type="interactions" value="2"/>
</dbReference>
<dbReference type="MINT" id="Q8LDU4"/>
<dbReference type="STRING" id="3702.Q8LDU4"/>
<dbReference type="PaxDb" id="3702-AT4G37000.1"/>
<dbReference type="ProteomicsDB" id="225941"/>
<dbReference type="EnsemblPlants" id="AT4G37000.1">
    <property type="protein sequence ID" value="AT4G37000.1"/>
    <property type="gene ID" value="AT4G37000"/>
</dbReference>
<dbReference type="GeneID" id="829854"/>
<dbReference type="Gramene" id="AT4G37000.1">
    <property type="protein sequence ID" value="AT4G37000.1"/>
    <property type="gene ID" value="AT4G37000"/>
</dbReference>
<dbReference type="KEGG" id="ath:AT4G37000"/>
<dbReference type="Araport" id="AT4G37000"/>
<dbReference type="TAIR" id="AT4G37000">
    <property type="gene designation" value="ACD2"/>
</dbReference>
<dbReference type="eggNOG" id="ENOG502QSTY">
    <property type="taxonomic scope" value="Eukaryota"/>
</dbReference>
<dbReference type="HOGENOM" id="CLU_073200_0_0_1"/>
<dbReference type="InParanoid" id="Q8LDU4"/>
<dbReference type="OMA" id="GHETANR"/>
<dbReference type="PhylomeDB" id="Q8LDU4"/>
<dbReference type="BioCyc" id="ARA:AT4G37000-MONOMER"/>
<dbReference type="BioCyc" id="MetaCyc:AT4G37000-MONOMER"/>
<dbReference type="BRENDA" id="1.3.7.12">
    <property type="organism ID" value="399"/>
</dbReference>
<dbReference type="UniPathway" id="UPA00674"/>
<dbReference type="EvolutionaryTrace" id="Q8LDU4"/>
<dbReference type="PRO" id="PR:Q8LDU4"/>
<dbReference type="Proteomes" id="UP000006548">
    <property type="component" value="Chromosome 4"/>
</dbReference>
<dbReference type="ExpressionAtlas" id="Q8LDU4">
    <property type="expression patterns" value="baseline and differential"/>
</dbReference>
<dbReference type="GO" id="GO:0009507">
    <property type="term" value="C:chloroplast"/>
    <property type="evidence" value="ECO:0000314"/>
    <property type="project" value="TAIR"/>
</dbReference>
<dbReference type="GO" id="GO:0009941">
    <property type="term" value="C:chloroplast envelope"/>
    <property type="evidence" value="ECO:0007005"/>
    <property type="project" value="TAIR"/>
</dbReference>
<dbReference type="GO" id="GO:0009570">
    <property type="term" value="C:chloroplast stroma"/>
    <property type="evidence" value="ECO:0007005"/>
    <property type="project" value="TAIR"/>
</dbReference>
<dbReference type="GO" id="GO:0009535">
    <property type="term" value="C:chloroplast thylakoid membrane"/>
    <property type="evidence" value="ECO:0007669"/>
    <property type="project" value="UniProtKB-SubCell"/>
</dbReference>
<dbReference type="GO" id="GO:0005737">
    <property type="term" value="C:cytoplasm"/>
    <property type="evidence" value="ECO:0000314"/>
    <property type="project" value="TAIR"/>
</dbReference>
<dbReference type="GO" id="GO:0005829">
    <property type="term" value="C:cytosol"/>
    <property type="evidence" value="ECO:0000314"/>
    <property type="project" value="TAIR"/>
</dbReference>
<dbReference type="GO" id="GO:0005739">
    <property type="term" value="C:mitochondrion"/>
    <property type="evidence" value="ECO:0000314"/>
    <property type="project" value="TAIR"/>
</dbReference>
<dbReference type="GO" id="GO:0005886">
    <property type="term" value="C:plasma membrane"/>
    <property type="evidence" value="ECO:0007005"/>
    <property type="project" value="TAIR"/>
</dbReference>
<dbReference type="GO" id="GO:0051743">
    <property type="term" value="F:red chlorophyll catabolite reductase activity"/>
    <property type="evidence" value="ECO:0000314"/>
    <property type="project" value="TAIR"/>
</dbReference>
<dbReference type="GO" id="GO:0015996">
    <property type="term" value="P:chlorophyll catabolic process"/>
    <property type="evidence" value="ECO:0000315"/>
    <property type="project" value="TAIR"/>
</dbReference>
<dbReference type="GO" id="GO:0098542">
    <property type="term" value="P:defense response to other organism"/>
    <property type="evidence" value="ECO:0000315"/>
    <property type="project" value="TAIR"/>
</dbReference>
<dbReference type="GO" id="GO:0010363">
    <property type="term" value="P:regulation of plant-type hypersensitive response"/>
    <property type="evidence" value="ECO:0000315"/>
    <property type="project" value="TAIR"/>
</dbReference>
<dbReference type="GO" id="GO:0043067">
    <property type="term" value="P:regulation of programmed cell death"/>
    <property type="evidence" value="ECO:0000315"/>
    <property type="project" value="TAIR"/>
</dbReference>
<dbReference type="FunFam" id="3.40.1500.20:FF:000001">
    <property type="entry name" value="Red chlorophyll catabolite reductase, chloroplastic"/>
    <property type="match status" value="1"/>
</dbReference>
<dbReference type="Gene3D" id="3.40.1500.20">
    <property type="match status" value="1"/>
</dbReference>
<dbReference type="InterPro" id="IPR009439">
    <property type="entry name" value="RCC_reductase"/>
</dbReference>
<dbReference type="PANTHER" id="PTHR34685">
    <property type="entry name" value="RED CHLOROPHYLL CATABOLITE REDUCTASE, CHLOROPLASTIC"/>
    <property type="match status" value="1"/>
</dbReference>
<dbReference type="PANTHER" id="PTHR34685:SF2">
    <property type="entry name" value="RED CHLOROPHYLL CATABOLITE REDUCTASE, CHLOROPLASTIC"/>
    <property type="match status" value="1"/>
</dbReference>
<dbReference type="Pfam" id="PF06405">
    <property type="entry name" value="RCC_reductase"/>
    <property type="match status" value="1"/>
</dbReference>
<evidence type="ECO:0000255" key="1"/>
<evidence type="ECO:0000269" key="2">
    <source>
    </source>
</evidence>
<evidence type="ECO:0000269" key="3">
    <source>
    </source>
</evidence>
<evidence type="ECO:0000269" key="4">
    <source>
    </source>
</evidence>
<evidence type="ECO:0000269" key="5">
    <source>
    </source>
</evidence>
<evidence type="ECO:0000269" key="6">
    <source>
    </source>
</evidence>
<evidence type="ECO:0000269" key="7">
    <source>
    </source>
</evidence>
<evidence type="ECO:0000303" key="8">
    <source>
    </source>
</evidence>
<evidence type="ECO:0000303" key="9">
    <source>
    </source>
</evidence>
<evidence type="ECO:0000305" key="10"/>
<evidence type="ECO:0000312" key="11">
    <source>
        <dbReference type="Araport" id="AT4G37000"/>
    </source>
</evidence>
<evidence type="ECO:0000312" key="12">
    <source>
        <dbReference type="EMBL" id="CAB16763.1"/>
    </source>
</evidence>
<evidence type="ECO:0007744" key="13">
    <source>
        <dbReference type="PDB" id="3AGA"/>
    </source>
</evidence>
<evidence type="ECO:0007744" key="14">
    <source>
        <dbReference type="PDB" id="3AGC"/>
    </source>
</evidence>
<evidence type="ECO:0007829" key="15">
    <source>
        <dbReference type="PDB" id="2ZXL"/>
    </source>
</evidence>
<evidence type="ECO:0007829" key="16">
    <source>
        <dbReference type="PDB" id="3AGC"/>
    </source>
</evidence>
<sequence length="319" mass="36449">MAMIFCNTLYSSSSPSYLSPLTSKPSRFSKNLRPRAQFQSMEDHDDHLRRKFMEFPYVSPTRKQLMVDLMSTVENRLQSQLLPCNLPPDVRNFNNPNGSAEASLHIRSGDKSSPIDFVIGSWIHCKIPTGVSLNITSISGFLNSSTKAPNFVVELIQSSSKSLVLILDLPHRKDLVLNPDYLKEYYQDTALDSHRQSLLKLPEVNPYVSPSLFVRSAFSPTASMLKIDAEEEDKLEEILRDHVSPAAKEVLEVWLERCVKEEEEKIVVGEEERMELERRDKSFRRKSIEDDLDLQFPRMFGEEVSSRVVHAIKEAFGVL</sequence>
<comment type="function">
    <text evidence="2">Catalyzes the key reaction of chlorophyll catabolism, porphyrin macrocycle cleavage of pheophorbide a (pheide a) to a primary fluorescent catabolite (pFCC). Works in a two-step reaction with pheophorbide a oxygenase (PaO) by reducing the C20/C1 double bond of the intermediate, RCC. Belongs to the chlorophyll catabolic enzymes (CCEs).</text>
</comment>
<comment type="catalytic activity">
    <reaction evidence="2">
        <text>primary fluorescent chlorophyll catabolite + 2 oxidized [2Fe-2S]-[ferredoxin] = red chlorophyll catabolite + 2 reduced [2Fe-2S]-[ferredoxin] + 3 H(+)</text>
        <dbReference type="Rhea" id="RHEA:24752"/>
        <dbReference type="Rhea" id="RHEA-COMP:10000"/>
        <dbReference type="Rhea" id="RHEA-COMP:10001"/>
        <dbReference type="ChEBI" id="CHEBI:15378"/>
        <dbReference type="ChEBI" id="CHEBI:33737"/>
        <dbReference type="ChEBI" id="CHEBI:33738"/>
        <dbReference type="ChEBI" id="CHEBI:58716"/>
        <dbReference type="ChEBI" id="CHEBI:77670"/>
        <dbReference type="EC" id="1.3.7.12"/>
    </reaction>
    <physiologicalReaction direction="right-to-left" evidence="2">
        <dbReference type="Rhea" id="RHEA:24754"/>
    </physiologicalReaction>
</comment>
<comment type="pathway">
    <text evidence="10">Porphyrin-containing compound metabolism; chlorophyll degradation.</text>
</comment>
<comment type="subunit">
    <text evidence="4 5 6 7">Homodimer (PubMed:19374909, PubMed:20727901). Interacts with HCAR (PubMed:23200839). Interacts with SGR1, NYC1, NOL, PPH, PAO and the LHCII complex (PubMed:22366162). Part of a SGR1-CCE-LHCII complex, which acts in chlorophyll breakdown (PubMed:22366162).</text>
</comment>
<comment type="subcellular location">
    <subcellularLocation>
        <location>Plastid</location>
        <location>Chloroplast stroma</location>
    </subcellularLocation>
    <subcellularLocation>
        <location>Plastid</location>
        <location>Chloroplast thylakoid membrane</location>
    </subcellularLocation>
    <text>And a low amount in mitochondria of 7-day-old seedlings.</text>
</comment>
<comment type="tissue specificity">
    <text>Expressed in all tissues tested, including roots.</text>
</comment>
<comment type="developmental stage">
    <text evidence="7">Present at all times of development. No change of levels during senescence or pathogen attack.</text>
</comment>
<comment type="miscellaneous">
    <text>The absence of light completely suppresses cell death in acd2 mutants.</text>
</comment>
<keyword id="KW-0002">3D-structure</keyword>
<keyword id="KW-0881">Chlorophyll catabolism</keyword>
<keyword id="KW-0150">Chloroplast</keyword>
<keyword id="KW-0175">Coiled coil</keyword>
<keyword id="KW-0472">Membrane</keyword>
<keyword id="KW-0521">NADP</keyword>
<keyword id="KW-0560">Oxidoreductase</keyword>
<keyword id="KW-0934">Plastid</keyword>
<keyword id="KW-1185">Reference proteome</keyword>
<keyword id="KW-0793">Thylakoid</keyword>
<keyword id="KW-0809">Transit peptide</keyword>
<name>RCCR_ARATH</name>
<proteinExistence type="evidence at protein level"/>
<protein>
    <recommendedName>
        <fullName evidence="8">Red chlorophyll catabolite reductase, chloroplastic</fullName>
        <shortName evidence="8">AtRCCR</shortName>
        <shortName evidence="10">RCC reductase</shortName>
        <ecNumber evidence="2">1.3.7.12</ecNumber>
    </recommendedName>
    <alternativeName>
        <fullName evidence="9">Accelerated cell death protein 2</fullName>
    </alternativeName>
</protein>
<organism>
    <name type="scientific">Arabidopsis thaliana</name>
    <name type="common">Mouse-ear cress</name>
    <dbReference type="NCBI Taxonomy" id="3702"/>
    <lineage>
        <taxon>Eukaryota</taxon>
        <taxon>Viridiplantae</taxon>
        <taxon>Streptophyta</taxon>
        <taxon>Embryophyta</taxon>
        <taxon>Tracheophyta</taxon>
        <taxon>Spermatophyta</taxon>
        <taxon>Magnoliopsida</taxon>
        <taxon>eudicotyledons</taxon>
        <taxon>Gunneridae</taxon>
        <taxon>Pentapetalae</taxon>
        <taxon>rosids</taxon>
        <taxon>malvids</taxon>
        <taxon>Brassicales</taxon>
        <taxon>Brassicaceae</taxon>
        <taxon>Camelineae</taxon>
        <taxon>Arabidopsis</taxon>
    </lineage>
</organism>
<feature type="transit peptide" description="Chloroplast" evidence="1">
    <location>
        <begin position="1"/>
        <end position="39"/>
    </location>
</feature>
<feature type="chain" id="PRO_0000022201" description="Red chlorophyll catabolite reductase, chloroplastic">
    <location>
        <begin position="40"/>
        <end position="319"/>
    </location>
</feature>
<feature type="coiled-coil region" evidence="1">
    <location>
        <begin position="255"/>
        <end position="286"/>
    </location>
</feature>
<feature type="binding site" evidence="5 13 14">
    <location>
        <position position="154"/>
    </location>
    <ligand>
        <name>red chlorophyll catabolite</name>
        <dbReference type="ChEBI" id="CHEBI:58716"/>
    </ligand>
</feature>
<feature type="binding site" evidence="5 13 14">
    <location>
        <begin position="207"/>
        <end position="209"/>
    </location>
    <ligand>
        <name>red chlorophyll catabolite</name>
        <dbReference type="ChEBI" id="CHEBI:58716"/>
    </ligand>
</feature>
<feature type="binding site" evidence="5 13 14">
    <location>
        <position position="291"/>
    </location>
    <ligand>
        <name>red chlorophyll catabolite</name>
        <dbReference type="ChEBI" id="CHEBI:58716"/>
    </ligand>
</feature>
<feature type="site" description="Important for stereospecificity of the product" evidence="5">
    <location>
        <position position="218"/>
    </location>
</feature>
<feature type="mutagenesis site" description="In acd2-12E13; spontaneous spreading cell death lesions." evidence="3">
    <original>G</original>
    <variation>V</variation>
    <location>
        <position position="140"/>
    </location>
</feature>
<feature type="mutagenesis site" description="In acd2-7; spontaneous spreading cell death lesions." evidence="3">
    <location>
        <begin position="181"/>
        <end position="192"/>
    </location>
</feature>
<feature type="mutagenesis site" description="Induces switch of RCCR stereospecificity product from pFCC-1 to pFCC-2." evidence="5">
    <original>F</original>
    <variation>V</variation>
    <location>
        <position position="218"/>
    </location>
</feature>
<feature type="mutagenesis site" description="In acd2-6; spontaneous spreading cell death lesions." evidence="3">
    <original>R</original>
    <variation>K</variation>
    <location>
        <position position="279"/>
    </location>
</feature>
<feature type="sequence conflict" description="In Ref. 7; AAM63013." evidence="10" ref="7">
    <original>D</original>
    <variation>E</variation>
    <location>
        <position position="290"/>
    </location>
</feature>
<feature type="turn" evidence="15">
    <location>
        <begin position="40"/>
        <end position="42"/>
    </location>
</feature>
<feature type="helix" evidence="15">
    <location>
        <begin position="44"/>
        <end position="48"/>
    </location>
</feature>
<feature type="helix" evidence="16">
    <location>
        <begin position="52"/>
        <end position="54"/>
    </location>
</feature>
<feature type="helix" evidence="16">
    <location>
        <begin position="60"/>
        <end position="76"/>
    </location>
</feature>
<feature type="turn" evidence="16">
    <location>
        <begin position="77"/>
        <end position="80"/>
    </location>
</feature>
<feature type="helix" evidence="16">
    <location>
        <begin position="88"/>
        <end position="91"/>
    </location>
</feature>
<feature type="strand" evidence="16">
    <location>
        <begin position="92"/>
        <end position="94"/>
    </location>
</feature>
<feature type="strand" evidence="16">
    <location>
        <begin position="98"/>
        <end position="109"/>
    </location>
</feature>
<feature type="strand" evidence="16">
    <location>
        <begin position="114"/>
        <end position="126"/>
    </location>
</feature>
<feature type="strand" evidence="15">
    <location>
        <begin position="128"/>
        <end position="130"/>
    </location>
</feature>
<feature type="strand" evidence="16">
    <location>
        <begin position="132"/>
        <end position="142"/>
    </location>
</feature>
<feature type="strand" evidence="16">
    <location>
        <begin position="151"/>
        <end position="168"/>
    </location>
</feature>
<feature type="turn" evidence="16">
    <location>
        <begin position="175"/>
        <end position="177"/>
    </location>
</feature>
<feature type="helix" evidence="16">
    <location>
        <begin position="179"/>
        <end position="185"/>
    </location>
</feature>
<feature type="strand" evidence="16">
    <location>
        <begin position="188"/>
        <end position="190"/>
    </location>
</feature>
<feature type="helix" evidence="16">
    <location>
        <begin position="191"/>
        <end position="199"/>
    </location>
</feature>
<feature type="strand" evidence="16">
    <location>
        <begin position="204"/>
        <end position="206"/>
    </location>
</feature>
<feature type="helix" evidence="16">
    <location>
        <begin position="212"/>
        <end position="217"/>
    </location>
</feature>
<feature type="strand" evidence="16">
    <location>
        <begin position="223"/>
        <end position="228"/>
    </location>
</feature>
<feature type="helix" evidence="16">
    <location>
        <begin position="232"/>
        <end position="241"/>
    </location>
</feature>
<feature type="helix" evidence="16">
    <location>
        <begin position="243"/>
        <end position="257"/>
    </location>
</feature>
<feature type="strand" evidence="16">
    <location>
        <begin position="261"/>
        <end position="263"/>
    </location>
</feature>
<feature type="helix" evidence="16">
    <location>
        <begin position="270"/>
        <end position="291"/>
    </location>
</feature>
<feature type="turn" evidence="16">
    <location>
        <begin position="292"/>
        <end position="295"/>
    </location>
</feature>
<feature type="helix" evidence="16">
    <location>
        <begin position="296"/>
        <end position="300"/>
    </location>
</feature>
<feature type="helix" evidence="16">
    <location>
        <begin position="302"/>
        <end position="316"/>
    </location>
</feature>